<sequence>MEFPTRFDVIVIGGGHAGTEAALAAARMGSQTLLLTHNIETLGQMSCNPAIGGIGKSHLVKEIDALGGAMARATDQAGIQFRVLNSRKGPAVRATRAQADRILYKAAIRHMLENQPNLTLFQQAADDLIVENDQVVGVVTQTGIRFNAKTVVLTTGTFLGGVIHIGMQNHAGGRAGDAPANALAKRLRELPFNVGRLKTGTPPRIDARTVDFSAMQQQWGDDPTPVMSFIGSRDEHPEQICCYVTRTTEETHDIIRSGFDRSPMFAGNIEGVGPRYCPSIEDKVNRFADKDSHQIFVEPEGLTTNELYPNGISTSLPFDIQLKAVRSIPGFENAHILRPGYAIEYDYLNPQDLRHTLETKFIQGLYFAGQINGTTGYEEAGAQGLLAGINASLRARDQEEWYPRRDEAYLGVLVDDLITMGTQEPYRMFTSRAEYRLILREDNADLRLTETGRKLGLVDDERWQKFSEKCEGIAKERSRLESTRIHPNTEAGERANGYLKQPMTRDQSLAELLRRPEIVYDHIAEIGAERAEDPNVADQVEIEIKYEGYISRQADEIERLRKNENTALPLDLDYDVIGGLSNEIKQKLKDVRPETVAQASRIQGVTPAAVSQILVHLKKRDLLKKQSA</sequence>
<comment type="function">
    <text evidence="1">NAD-binding protein involved in the addition of a carboxymethylaminomethyl (cmnm) group at the wobble position (U34) of certain tRNAs, forming tRNA-cmnm(5)s(2)U34.</text>
</comment>
<comment type="cofactor">
    <cofactor evidence="1">
        <name>FAD</name>
        <dbReference type="ChEBI" id="CHEBI:57692"/>
    </cofactor>
</comment>
<comment type="subunit">
    <text evidence="1">Homodimer. Heterotetramer of two MnmE and two MnmG subunits.</text>
</comment>
<comment type="subcellular location">
    <subcellularLocation>
        <location evidence="1">Cytoplasm</location>
    </subcellularLocation>
</comment>
<comment type="similarity">
    <text evidence="1">Belongs to the MnmG family.</text>
</comment>
<protein>
    <recommendedName>
        <fullName evidence="1">tRNA uridine 5-carboxymethylaminomethyl modification enzyme MnmG</fullName>
    </recommendedName>
    <alternativeName>
        <fullName evidence="1">Glucose-inhibited division protein A</fullName>
    </alternativeName>
</protein>
<evidence type="ECO:0000255" key="1">
    <source>
        <dbReference type="HAMAP-Rule" id="MF_00129"/>
    </source>
</evidence>
<dbReference type="EMBL" id="CP000514">
    <property type="protein sequence ID" value="ABM20954.1"/>
    <property type="molecule type" value="Genomic_DNA"/>
</dbReference>
<dbReference type="RefSeq" id="WP_011787287.1">
    <property type="nucleotide sequence ID" value="NC_008740.1"/>
</dbReference>
<dbReference type="SMR" id="A1U7I5"/>
<dbReference type="STRING" id="351348.Maqu_3886"/>
<dbReference type="KEGG" id="maq:Maqu_3886"/>
<dbReference type="eggNOG" id="COG0445">
    <property type="taxonomic scope" value="Bacteria"/>
</dbReference>
<dbReference type="HOGENOM" id="CLU_007831_2_2_6"/>
<dbReference type="OrthoDB" id="9815560at2"/>
<dbReference type="Proteomes" id="UP000000998">
    <property type="component" value="Chromosome"/>
</dbReference>
<dbReference type="GO" id="GO:0005829">
    <property type="term" value="C:cytosol"/>
    <property type="evidence" value="ECO:0007669"/>
    <property type="project" value="TreeGrafter"/>
</dbReference>
<dbReference type="GO" id="GO:0050660">
    <property type="term" value="F:flavin adenine dinucleotide binding"/>
    <property type="evidence" value="ECO:0007669"/>
    <property type="project" value="UniProtKB-UniRule"/>
</dbReference>
<dbReference type="GO" id="GO:0030488">
    <property type="term" value="P:tRNA methylation"/>
    <property type="evidence" value="ECO:0007669"/>
    <property type="project" value="TreeGrafter"/>
</dbReference>
<dbReference type="GO" id="GO:0002098">
    <property type="term" value="P:tRNA wobble uridine modification"/>
    <property type="evidence" value="ECO:0007669"/>
    <property type="project" value="InterPro"/>
</dbReference>
<dbReference type="FunFam" id="1.10.10.1800:FF:000001">
    <property type="entry name" value="tRNA uridine 5-carboxymethylaminomethyl modification enzyme MnmG"/>
    <property type="match status" value="1"/>
</dbReference>
<dbReference type="FunFam" id="1.10.150.570:FF:000001">
    <property type="entry name" value="tRNA uridine 5-carboxymethylaminomethyl modification enzyme MnmG"/>
    <property type="match status" value="1"/>
</dbReference>
<dbReference type="FunFam" id="3.50.50.60:FF:000002">
    <property type="entry name" value="tRNA uridine 5-carboxymethylaminomethyl modification enzyme MnmG"/>
    <property type="match status" value="1"/>
</dbReference>
<dbReference type="FunFam" id="3.50.50.60:FF:000010">
    <property type="entry name" value="tRNA uridine 5-carboxymethylaminomethyl modification enzyme MnmG"/>
    <property type="match status" value="1"/>
</dbReference>
<dbReference type="Gene3D" id="3.50.50.60">
    <property type="entry name" value="FAD/NAD(P)-binding domain"/>
    <property type="match status" value="2"/>
</dbReference>
<dbReference type="Gene3D" id="1.10.150.570">
    <property type="entry name" value="GidA associated domain, C-terminal subdomain"/>
    <property type="match status" value="1"/>
</dbReference>
<dbReference type="Gene3D" id="1.10.10.1800">
    <property type="entry name" value="tRNA uridine 5-carboxymethylaminomethyl modification enzyme MnmG/GidA"/>
    <property type="match status" value="1"/>
</dbReference>
<dbReference type="HAMAP" id="MF_00129">
    <property type="entry name" value="MnmG_GidA"/>
    <property type="match status" value="1"/>
</dbReference>
<dbReference type="InterPro" id="IPR036188">
    <property type="entry name" value="FAD/NAD-bd_sf"/>
</dbReference>
<dbReference type="InterPro" id="IPR049312">
    <property type="entry name" value="GIDA_C_N"/>
</dbReference>
<dbReference type="InterPro" id="IPR004416">
    <property type="entry name" value="MnmG"/>
</dbReference>
<dbReference type="InterPro" id="IPR002218">
    <property type="entry name" value="MnmG-rel"/>
</dbReference>
<dbReference type="InterPro" id="IPR020595">
    <property type="entry name" value="MnmG-rel_CS"/>
</dbReference>
<dbReference type="InterPro" id="IPR026904">
    <property type="entry name" value="MnmG_C"/>
</dbReference>
<dbReference type="InterPro" id="IPR047001">
    <property type="entry name" value="MnmG_C_subdom"/>
</dbReference>
<dbReference type="InterPro" id="IPR044920">
    <property type="entry name" value="MnmG_C_subdom_sf"/>
</dbReference>
<dbReference type="InterPro" id="IPR040131">
    <property type="entry name" value="MnmG_N"/>
</dbReference>
<dbReference type="NCBIfam" id="TIGR00136">
    <property type="entry name" value="mnmG_gidA"/>
    <property type="match status" value="1"/>
</dbReference>
<dbReference type="PANTHER" id="PTHR11806">
    <property type="entry name" value="GLUCOSE INHIBITED DIVISION PROTEIN A"/>
    <property type="match status" value="1"/>
</dbReference>
<dbReference type="PANTHER" id="PTHR11806:SF0">
    <property type="entry name" value="PROTEIN MTO1 HOMOLOG, MITOCHONDRIAL"/>
    <property type="match status" value="1"/>
</dbReference>
<dbReference type="Pfam" id="PF01134">
    <property type="entry name" value="GIDA"/>
    <property type="match status" value="1"/>
</dbReference>
<dbReference type="Pfam" id="PF21680">
    <property type="entry name" value="GIDA_C_1st"/>
    <property type="match status" value="1"/>
</dbReference>
<dbReference type="Pfam" id="PF13932">
    <property type="entry name" value="SAM_GIDA_C"/>
    <property type="match status" value="1"/>
</dbReference>
<dbReference type="SMART" id="SM01228">
    <property type="entry name" value="GIDA_assoc_3"/>
    <property type="match status" value="1"/>
</dbReference>
<dbReference type="SUPFAM" id="SSF51905">
    <property type="entry name" value="FAD/NAD(P)-binding domain"/>
    <property type="match status" value="1"/>
</dbReference>
<dbReference type="PROSITE" id="PS01280">
    <property type="entry name" value="GIDA_1"/>
    <property type="match status" value="1"/>
</dbReference>
<dbReference type="PROSITE" id="PS01281">
    <property type="entry name" value="GIDA_2"/>
    <property type="match status" value="1"/>
</dbReference>
<name>MNMG_MARN8</name>
<organism>
    <name type="scientific">Marinobacter nauticus (strain ATCC 700491 / DSM 11845 / VT8)</name>
    <name type="common">Marinobacter aquaeolei</name>
    <dbReference type="NCBI Taxonomy" id="351348"/>
    <lineage>
        <taxon>Bacteria</taxon>
        <taxon>Pseudomonadati</taxon>
        <taxon>Pseudomonadota</taxon>
        <taxon>Gammaproteobacteria</taxon>
        <taxon>Pseudomonadales</taxon>
        <taxon>Marinobacteraceae</taxon>
        <taxon>Marinobacter</taxon>
    </lineage>
</organism>
<proteinExistence type="inferred from homology"/>
<keyword id="KW-0963">Cytoplasm</keyword>
<keyword id="KW-0274">FAD</keyword>
<keyword id="KW-0285">Flavoprotein</keyword>
<keyword id="KW-0520">NAD</keyword>
<keyword id="KW-0819">tRNA processing</keyword>
<gene>
    <name evidence="1" type="primary">mnmG</name>
    <name evidence="1" type="synonym">gidA</name>
    <name type="ordered locus">Maqu_3886</name>
</gene>
<feature type="chain" id="PRO_1000016620" description="tRNA uridine 5-carboxymethylaminomethyl modification enzyme MnmG">
    <location>
        <begin position="1"/>
        <end position="628"/>
    </location>
</feature>
<feature type="binding site" evidence="1">
    <location>
        <begin position="13"/>
        <end position="18"/>
    </location>
    <ligand>
        <name>FAD</name>
        <dbReference type="ChEBI" id="CHEBI:57692"/>
    </ligand>
</feature>
<feature type="binding site" evidence="1">
    <location>
        <begin position="273"/>
        <end position="287"/>
    </location>
    <ligand>
        <name>NAD(+)</name>
        <dbReference type="ChEBI" id="CHEBI:57540"/>
    </ligand>
</feature>
<accession>A1U7I5</accession>
<reference key="1">
    <citation type="journal article" date="2011" name="Appl. Environ. Microbiol.">
        <title>Genomic potential of Marinobacter aquaeolei, a biogeochemical 'opportunitroph'.</title>
        <authorList>
            <person name="Singer E."/>
            <person name="Webb E.A."/>
            <person name="Nelson W.C."/>
            <person name="Heidelberg J.F."/>
            <person name="Ivanova N."/>
            <person name="Pati A."/>
            <person name="Edwards K.J."/>
        </authorList>
    </citation>
    <scope>NUCLEOTIDE SEQUENCE [LARGE SCALE GENOMIC DNA]</scope>
    <source>
        <strain>ATCC 700491 / DSM 11845 / VT8</strain>
    </source>
</reference>